<feature type="chain" id="PRO_0000440094" description="Probable ergosterol biosynthetic protein 28 homolog" evidence="6">
    <location>
        <begin position="1"/>
        <end position="162"/>
    </location>
</feature>
<feature type="transmembrane region" description="Helical" evidence="1">
    <location>
        <begin position="7"/>
        <end position="25"/>
    </location>
</feature>
<feature type="transmembrane region" description="Helical" evidence="1">
    <location>
        <begin position="40"/>
        <end position="60"/>
    </location>
</feature>
<feature type="transmembrane region" description="Helical" evidence="1">
    <location>
        <begin position="69"/>
        <end position="89"/>
    </location>
</feature>
<feature type="transmembrane region" description="Helical" evidence="1">
    <location>
        <begin position="96"/>
        <end position="116"/>
    </location>
</feature>
<feature type="mutagenesis site" description="In gk697770; leads to degradation of slo-1 in the dorsal cord and body wall muscle in a sel-11 and ddi-1 dependent manner. Reduces the amount of slo-1 localized to the presynaptic terminal of neurons by over 70%. Exhibits moderate resistance to ethanol-induced suppression of locomotory behavior. Suppresses the reduced frequency of lateral swimming behavior, on a slo-1 mutant background." evidence="3 4">
    <location>
        <begin position="33"/>
        <end position="162"/>
    </location>
</feature>
<feature type="mutagenesis site" description="In cim16; restores the locomotory speed defects and aldicarb sensitivity in the slo-1 (ky399gf) gain of function mutant." evidence="2 4">
    <location>
        <begin position="156"/>
        <end position="162"/>
    </location>
</feature>
<organism evidence="7">
    <name type="scientific">Caenorhabditis elegans</name>
    <dbReference type="NCBI Taxonomy" id="6239"/>
    <lineage>
        <taxon>Eukaryota</taxon>
        <taxon>Metazoa</taxon>
        <taxon>Ecdysozoa</taxon>
        <taxon>Nematoda</taxon>
        <taxon>Chromadorea</taxon>
        <taxon>Rhabditida</taxon>
        <taxon>Rhabditina</taxon>
        <taxon>Rhabditomorpha</taxon>
        <taxon>Rhabditoidea</taxon>
        <taxon>Rhabditidae</taxon>
        <taxon>Peloderinae</taxon>
        <taxon>Caenorhabditis</taxon>
    </lineage>
</organism>
<keyword id="KW-0966">Cell projection</keyword>
<keyword id="KW-0256">Endoplasmic reticulum</keyword>
<keyword id="KW-0472">Membrane</keyword>
<keyword id="KW-1185">Reference proteome</keyword>
<keyword id="KW-0812">Transmembrane</keyword>
<keyword id="KW-1133">Transmembrane helix</keyword>
<accession>G5EEQ9</accession>
<reference evidence="7" key="1">
    <citation type="journal article" date="1998" name="Science">
        <title>Genome sequence of the nematode C. elegans: a platform for investigating biology.</title>
        <authorList>
            <consortium name="The C. elegans sequencing consortium"/>
        </authorList>
    </citation>
    <scope>NUCLEOTIDE SEQUENCE [LARGE SCALE GENOMIC DNA]</scope>
    <source>
        <strain evidence="7">Bristol N2</strain>
    </source>
</reference>
<reference evidence="6" key="2">
    <citation type="journal article" date="2017" name="Elife">
        <title>ERG-28 controls BK channel trafficking in the ER to regulate synaptic function and alcohol response in C. elegans.</title>
        <authorList>
            <person name="Oh K.H."/>
            <person name="Haney J.J."/>
            <person name="Wang X."/>
            <person name="Chuang C.F."/>
            <person name="Richmond J.E."/>
            <person name="Kim H."/>
        </authorList>
    </citation>
    <scope>FUNCTION</scope>
    <scope>SUBCELLULAR LOCATION</scope>
    <scope>TISSUE SPECIFICITY</scope>
    <scope>DISRUPTION PHENOTYPE</scope>
    <scope>MUTAGENESIS OF 156-GLN--LYS-162</scope>
</reference>
<reference evidence="6" key="3">
    <citation type="journal article" date="2019" name="Sci. Rep.">
        <title>BK channel clustering is required for normal behavioral alcohol sensitivity in C. elegans.</title>
        <authorList>
            <person name="Oh K.H."/>
            <person name="Kim H."/>
        </authorList>
    </citation>
    <scope>FUNCTION</scope>
    <scope>MUTAGENESIS OF 33-TYR--LYS-162</scope>
</reference>
<reference evidence="6" key="4">
    <citation type="journal article" date="2020" name="PLoS Genet.">
        <title>BK channel density is regulated by endoplasmic reticulum associated degradation and influenced by the SKN-1A/NRF1 transcription factor.</title>
        <authorList>
            <person name="Cheung T.P."/>
            <person name="Choe J.Y."/>
            <person name="Richmond J.E."/>
            <person name="Kim H."/>
        </authorList>
    </citation>
    <scope>FUNCTION</scope>
    <scope>MUTAGENESIS OF 33-TYR--LYS-162 AND 156-GLN--LYS-162</scope>
</reference>
<comment type="function">
    <text evidence="2 3 4">Promotes the translocation of slo-1 potassium ion channels from the endoplasmic reticulum to its final destination at the plasma membrane, probably by shielding from premature proteasomal degradation in the endoplasmic reticulum (PubMed:28168949, PubMed:32502151). Maintains the levels of slo-1 potassium ion channel at the presynaptic neurons (PubMed:31308408).</text>
</comment>
<comment type="subcellular location">
    <subcellularLocation>
        <location evidence="2">Endoplasmic reticulum membrane</location>
        <topology evidence="1">Multi-pass membrane protein</topology>
    </subcellularLocation>
    <subcellularLocation>
        <location evidence="2">Cell projection</location>
        <location evidence="2">Dendrite</location>
    </subcellularLocation>
    <text evidence="2">Localizes to puncta throughout synaptic terminals and dendrites.</text>
</comment>
<comment type="tissue specificity">
    <text evidence="2">Expressed in tissues including muscles, intestine and neurons.</text>
</comment>
<comment type="disruption phenotype">
    <text evidence="2">Hypersensitive to the acetylcholinesterase inhibitor aldicarb. In a slo-1 (ky399gf) gain of function mutant, restores normal locomotory speed and sensitivity to aldicarb.</text>
</comment>
<comment type="similarity">
    <text evidence="6">Belongs to the ERG28 family.</text>
</comment>
<gene>
    <name evidence="5 8" type="primary">erg-28</name>
    <name evidence="8" type="ORF">C14C10.6</name>
</gene>
<protein>
    <recommendedName>
        <fullName evidence="6">Probable ergosterol biosynthetic protein 28 homolog</fullName>
    </recommendedName>
</protein>
<name>ERG28_CAEEL</name>
<proteinExistence type="evidence at protein level"/>
<evidence type="ECO:0000255" key="1"/>
<evidence type="ECO:0000269" key="2">
    <source>
    </source>
</evidence>
<evidence type="ECO:0000269" key="3">
    <source>
    </source>
</evidence>
<evidence type="ECO:0000269" key="4">
    <source>
    </source>
</evidence>
<evidence type="ECO:0000303" key="5">
    <source>
    </source>
</evidence>
<evidence type="ECO:0000305" key="6"/>
<evidence type="ECO:0000312" key="7">
    <source>
        <dbReference type="Proteomes" id="UP000001940"/>
    </source>
</evidence>
<evidence type="ECO:0000312" key="8">
    <source>
        <dbReference type="WormBase" id="C14C10.6"/>
    </source>
</evidence>
<sequence length="162" mass="18542">MERSTRAWMSIVVVQAMGSVWMCYAKQNSASHYTSTLPALSRAHALPLALLCILRIVLIFDFRNFSIHIAHILLSILTAIHTMTEVFFYQSMSYGIVTVTEVTLNSFSVVVMLTFLLSPSFKNEQEGKEKRARKVTAKHYMEGEMLTPEDDDELVQAYKKWK</sequence>
<dbReference type="EMBL" id="BX284605">
    <property type="protein sequence ID" value="CAC42259.1"/>
    <property type="molecule type" value="Genomic_DNA"/>
</dbReference>
<dbReference type="RefSeq" id="NP_506154.1">
    <property type="nucleotide sequence ID" value="NM_073753.2"/>
</dbReference>
<dbReference type="FunCoup" id="G5EEQ9">
    <property type="interactions" value="87"/>
</dbReference>
<dbReference type="STRING" id="6239.C14C10.6.1"/>
<dbReference type="PaxDb" id="6239-C14C10.6"/>
<dbReference type="PeptideAtlas" id="G5EEQ9"/>
<dbReference type="EnsemblMetazoa" id="C14C10.6.1">
    <property type="protein sequence ID" value="C14C10.6.1"/>
    <property type="gene ID" value="WBGene00007589"/>
</dbReference>
<dbReference type="GeneID" id="179727"/>
<dbReference type="KEGG" id="cel:CELE_C14C10.6"/>
<dbReference type="AGR" id="WB:WBGene00007589"/>
<dbReference type="CTD" id="179727"/>
<dbReference type="WormBase" id="C14C10.6">
    <property type="protein sequence ID" value="CE28204"/>
    <property type="gene ID" value="WBGene00007589"/>
    <property type="gene designation" value="erg-28"/>
</dbReference>
<dbReference type="eggNOG" id="KOG3455">
    <property type="taxonomic scope" value="Eukaryota"/>
</dbReference>
<dbReference type="HOGENOM" id="CLU_1636954_0_0_1"/>
<dbReference type="InParanoid" id="G5EEQ9"/>
<dbReference type="OMA" id="QAMGSVW"/>
<dbReference type="OrthoDB" id="5846778at2759"/>
<dbReference type="PRO" id="PR:G5EEQ9"/>
<dbReference type="Proteomes" id="UP000001940">
    <property type="component" value="Chromosome V"/>
</dbReference>
<dbReference type="Bgee" id="WBGene00007589">
    <property type="expression patterns" value="Expressed in embryo and 3 other cell types or tissues"/>
</dbReference>
<dbReference type="GO" id="GO:0030425">
    <property type="term" value="C:dendrite"/>
    <property type="evidence" value="ECO:0007669"/>
    <property type="project" value="UniProtKB-SubCell"/>
</dbReference>
<dbReference type="GO" id="GO:0005789">
    <property type="term" value="C:endoplasmic reticulum membrane"/>
    <property type="evidence" value="ECO:0007669"/>
    <property type="project" value="UniProtKB-SubCell"/>
</dbReference>